<dbReference type="EC" id="2.1.1.199" evidence="1"/>
<dbReference type="EMBL" id="CP000263">
    <property type="protein sequence ID" value="ABJ90613.1"/>
    <property type="molecule type" value="Genomic_DNA"/>
</dbReference>
<dbReference type="RefSeq" id="WP_011672532.1">
    <property type="nucleotide sequence ID" value="NC_008513.1"/>
</dbReference>
<dbReference type="SMR" id="Q057T6"/>
<dbReference type="STRING" id="372461.BCc_137"/>
<dbReference type="KEGG" id="bcc:BCc_137"/>
<dbReference type="eggNOG" id="COG0275">
    <property type="taxonomic scope" value="Bacteria"/>
</dbReference>
<dbReference type="HOGENOM" id="CLU_038422_2_0_6"/>
<dbReference type="OrthoDB" id="9806637at2"/>
<dbReference type="Proteomes" id="UP000000669">
    <property type="component" value="Chromosome"/>
</dbReference>
<dbReference type="GO" id="GO:0005737">
    <property type="term" value="C:cytoplasm"/>
    <property type="evidence" value="ECO:0007669"/>
    <property type="project" value="UniProtKB-SubCell"/>
</dbReference>
<dbReference type="GO" id="GO:0071424">
    <property type="term" value="F:rRNA (cytosine-N4-)-methyltransferase activity"/>
    <property type="evidence" value="ECO:0007669"/>
    <property type="project" value="UniProtKB-UniRule"/>
</dbReference>
<dbReference type="GO" id="GO:0070475">
    <property type="term" value="P:rRNA base methylation"/>
    <property type="evidence" value="ECO:0007669"/>
    <property type="project" value="UniProtKB-UniRule"/>
</dbReference>
<dbReference type="Gene3D" id="1.10.150.170">
    <property type="entry name" value="Putative methyltransferase TM0872, insert domain"/>
    <property type="match status" value="1"/>
</dbReference>
<dbReference type="Gene3D" id="3.40.50.150">
    <property type="entry name" value="Vaccinia Virus protein VP39"/>
    <property type="match status" value="1"/>
</dbReference>
<dbReference type="HAMAP" id="MF_01007">
    <property type="entry name" value="16SrRNA_methyltr_H"/>
    <property type="match status" value="1"/>
</dbReference>
<dbReference type="InterPro" id="IPR002903">
    <property type="entry name" value="RsmH"/>
</dbReference>
<dbReference type="InterPro" id="IPR023397">
    <property type="entry name" value="SAM-dep_MeTrfase_MraW_recog"/>
</dbReference>
<dbReference type="InterPro" id="IPR029063">
    <property type="entry name" value="SAM-dependent_MTases_sf"/>
</dbReference>
<dbReference type="NCBIfam" id="TIGR00006">
    <property type="entry name" value="16S rRNA (cytosine(1402)-N(4))-methyltransferase RsmH"/>
    <property type="match status" value="1"/>
</dbReference>
<dbReference type="PANTHER" id="PTHR11265:SF0">
    <property type="entry name" value="12S RRNA N4-METHYLCYTIDINE METHYLTRANSFERASE"/>
    <property type="match status" value="1"/>
</dbReference>
<dbReference type="PANTHER" id="PTHR11265">
    <property type="entry name" value="S-ADENOSYL-METHYLTRANSFERASE MRAW"/>
    <property type="match status" value="1"/>
</dbReference>
<dbReference type="Pfam" id="PF01795">
    <property type="entry name" value="Methyltransf_5"/>
    <property type="match status" value="1"/>
</dbReference>
<dbReference type="PIRSF" id="PIRSF004486">
    <property type="entry name" value="MraW"/>
    <property type="match status" value="1"/>
</dbReference>
<dbReference type="SUPFAM" id="SSF81799">
    <property type="entry name" value="Putative methyltransferase TM0872, insert domain"/>
    <property type="match status" value="1"/>
</dbReference>
<dbReference type="SUPFAM" id="SSF53335">
    <property type="entry name" value="S-adenosyl-L-methionine-dependent methyltransferases"/>
    <property type="match status" value="1"/>
</dbReference>
<sequence>MSHIPVLLKETINALNIKKNGIYIDGTFGNGGHTKEILKYLGQSGKLYSIDQDIKSVNKGKKIKDKRFSIIFGKFSKKIPYIYKKNKKKKIDGILLDLGISSNQINQNDRGFSFMKNGLLDMRMNNTTGIPAWKWLKKSSQKEIEKVLRKYGEERYSKKISYAIYNRNKKKTITQTLDLVQIIKKAIPKIDKYKHPATRTFQAIRIHINNEIKELKKTLKISIKILKKKRRLVIICFHSLENRIVKNFFKKHGKTFFIPRGLPITEKKIKKIENKKIKIIKKIKPKKTEIQKNKRSRSAILRIAEML</sequence>
<comment type="function">
    <text evidence="1">Specifically methylates the N4 position of cytidine in position 1402 (C1402) of 16S rRNA.</text>
</comment>
<comment type="catalytic activity">
    <reaction evidence="1">
        <text>cytidine(1402) in 16S rRNA + S-adenosyl-L-methionine = N(4)-methylcytidine(1402) in 16S rRNA + S-adenosyl-L-homocysteine + H(+)</text>
        <dbReference type="Rhea" id="RHEA:42928"/>
        <dbReference type="Rhea" id="RHEA-COMP:10286"/>
        <dbReference type="Rhea" id="RHEA-COMP:10287"/>
        <dbReference type="ChEBI" id="CHEBI:15378"/>
        <dbReference type="ChEBI" id="CHEBI:57856"/>
        <dbReference type="ChEBI" id="CHEBI:59789"/>
        <dbReference type="ChEBI" id="CHEBI:74506"/>
        <dbReference type="ChEBI" id="CHEBI:82748"/>
        <dbReference type="EC" id="2.1.1.199"/>
    </reaction>
</comment>
<comment type="subcellular location">
    <subcellularLocation>
        <location evidence="1">Cytoplasm</location>
    </subcellularLocation>
</comment>
<comment type="similarity">
    <text evidence="1">Belongs to the methyltransferase superfamily. RsmH family.</text>
</comment>
<feature type="chain" id="PRO_0000318870" description="Ribosomal RNA small subunit methyltransferase H">
    <location>
        <begin position="1"/>
        <end position="307"/>
    </location>
</feature>
<feature type="binding site" evidence="1">
    <location>
        <begin position="31"/>
        <end position="33"/>
    </location>
    <ligand>
        <name>S-adenosyl-L-methionine</name>
        <dbReference type="ChEBI" id="CHEBI:59789"/>
    </ligand>
</feature>
<feature type="binding site" evidence="1">
    <location>
        <position position="51"/>
    </location>
    <ligand>
        <name>S-adenosyl-L-methionine</name>
        <dbReference type="ChEBI" id="CHEBI:59789"/>
    </ligand>
</feature>
<feature type="binding site" evidence="1">
    <location>
        <position position="83"/>
    </location>
    <ligand>
        <name>S-adenosyl-L-methionine</name>
        <dbReference type="ChEBI" id="CHEBI:59789"/>
    </ligand>
</feature>
<feature type="binding site" evidence="1">
    <location>
        <position position="97"/>
    </location>
    <ligand>
        <name>S-adenosyl-L-methionine</name>
        <dbReference type="ChEBI" id="CHEBI:59789"/>
    </ligand>
</feature>
<feature type="binding site" evidence="1">
    <location>
        <position position="104"/>
    </location>
    <ligand>
        <name>S-adenosyl-L-methionine</name>
        <dbReference type="ChEBI" id="CHEBI:59789"/>
    </ligand>
</feature>
<accession>Q057T6</accession>
<organism>
    <name type="scientific">Buchnera aphidicola subsp. Cinara cedri (strain Cc)</name>
    <dbReference type="NCBI Taxonomy" id="372461"/>
    <lineage>
        <taxon>Bacteria</taxon>
        <taxon>Pseudomonadati</taxon>
        <taxon>Pseudomonadota</taxon>
        <taxon>Gammaproteobacteria</taxon>
        <taxon>Enterobacterales</taxon>
        <taxon>Erwiniaceae</taxon>
        <taxon>Buchnera</taxon>
    </lineage>
</organism>
<gene>
    <name evidence="1" type="primary">rsmH</name>
    <name type="synonym">mraW</name>
    <name type="ordered locus">BCc_137</name>
</gene>
<keyword id="KW-0963">Cytoplasm</keyword>
<keyword id="KW-0489">Methyltransferase</keyword>
<keyword id="KW-1185">Reference proteome</keyword>
<keyword id="KW-0698">rRNA processing</keyword>
<keyword id="KW-0949">S-adenosyl-L-methionine</keyword>
<keyword id="KW-0808">Transferase</keyword>
<protein>
    <recommendedName>
        <fullName evidence="1">Ribosomal RNA small subunit methyltransferase H</fullName>
        <ecNumber evidence="1">2.1.1.199</ecNumber>
    </recommendedName>
    <alternativeName>
        <fullName evidence="1">16S rRNA m(4)C1402 methyltransferase</fullName>
    </alternativeName>
    <alternativeName>
        <fullName evidence="1">rRNA (cytosine-N(4)-)-methyltransferase RsmH</fullName>
    </alternativeName>
</protein>
<name>RSMH_BUCCC</name>
<reference key="1">
    <citation type="journal article" date="2006" name="Science">
        <title>A small microbial genome: the end of a long symbiotic relationship?</title>
        <authorList>
            <person name="Perez-Brocal V."/>
            <person name="Gil R."/>
            <person name="Ramos S."/>
            <person name="Lamelas A."/>
            <person name="Postigo M."/>
            <person name="Michelena J.M."/>
            <person name="Silva F.J."/>
            <person name="Moya A."/>
            <person name="Latorre A."/>
        </authorList>
    </citation>
    <scope>NUCLEOTIDE SEQUENCE [LARGE SCALE GENOMIC DNA]</scope>
    <source>
        <strain>Cc</strain>
    </source>
</reference>
<proteinExistence type="inferred from homology"/>
<evidence type="ECO:0000255" key="1">
    <source>
        <dbReference type="HAMAP-Rule" id="MF_01007"/>
    </source>
</evidence>